<gene>
    <name evidence="1" type="primary">atpC</name>
    <name type="ordered locus">BCB4264_A5425</name>
</gene>
<sequence length="133" mass="14644">MKTFPVSIVTPDGPVYEKEVEMVSVKAESGEMGILPGHIPTVAPLKISAVRLKNGGHTDYVAVSGGFIEVRPDKVTVLSSSAEEANHIDIHRANEAKRRAEQRLQDKQAHVDFKRAEMALQRAVNRLNVSDMK</sequence>
<dbReference type="EMBL" id="CP001176">
    <property type="protein sequence ID" value="ACK59880.1"/>
    <property type="molecule type" value="Genomic_DNA"/>
</dbReference>
<dbReference type="RefSeq" id="WP_000847211.1">
    <property type="nucleotide sequence ID" value="NZ_VEHB01000004.1"/>
</dbReference>
<dbReference type="SMR" id="B7HFK0"/>
<dbReference type="GeneID" id="93005819"/>
<dbReference type="KEGG" id="bcb:BCB4264_A5425"/>
<dbReference type="HOGENOM" id="CLU_084338_1_3_9"/>
<dbReference type="Proteomes" id="UP000007096">
    <property type="component" value="Chromosome"/>
</dbReference>
<dbReference type="GO" id="GO:0005886">
    <property type="term" value="C:plasma membrane"/>
    <property type="evidence" value="ECO:0007669"/>
    <property type="project" value="UniProtKB-SubCell"/>
</dbReference>
<dbReference type="GO" id="GO:0045259">
    <property type="term" value="C:proton-transporting ATP synthase complex"/>
    <property type="evidence" value="ECO:0007669"/>
    <property type="project" value="UniProtKB-KW"/>
</dbReference>
<dbReference type="GO" id="GO:0005524">
    <property type="term" value="F:ATP binding"/>
    <property type="evidence" value="ECO:0007669"/>
    <property type="project" value="UniProtKB-UniRule"/>
</dbReference>
<dbReference type="GO" id="GO:0046933">
    <property type="term" value="F:proton-transporting ATP synthase activity, rotational mechanism"/>
    <property type="evidence" value="ECO:0007669"/>
    <property type="project" value="UniProtKB-UniRule"/>
</dbReference>
<dbReference type="CDD" id="cd12152">
    <property type="entry name" value="F1-ATPase_delta"/>
    <property type="match status" value="1"/>
</dbReference>
<dbReference type="FunFam" id="1.20.5.440:FF:000001">
    <property type="entry name" value="ATP synthase epsilon chain"/>
    <property type="match status" value="1"/>
</dbReference>
<dbReference type="FunFam" id="2.60.15.10:FF:000001">
    <property type="entry name" value="ATP synthase epsilon chain"/>
    <property type="match status" value="1"/>
</dbReference>
<dbReference type="Gene3D" id="1.20.5.440">
    <property type="entry name" value="ATP synthase delta/epsilon subunit, C-terminal domain"/>
    <property type="match status" value="1"/>
</dbReference>
<dbReference type="Gene3D" id="2.60.15.10">
    <property type="entry name" value="F0F1 ATP synthase delta/epsilon subunit, N-terminal"/>
    <property type="match status" value="1"/>
</dbReference>
<dbReference type="HAMAP" id="MF_00530">
    <property type="entry name" value="ATP_synth_epsil_bac"/>
    <property type="match status" value="1"/>
</dbReference>
<dbReference type="InterPro" id="IPR036794">
    <property type="entry name" value="ATP_F1_dsu/esu_C_sf"/>
</dbReference>
<dbReference type="InterPro" id="IPR001469">
    <property type="entry name" value="ATP_synth_F1_dsu/esu"/>
</dbReference>
<dbReference type="InterPro" id="IPR020546">
    <property type="entry name" value="ATP_synth_F1_dsu/esu_N"/>
</dbReference>
<dbReference type="InterPro" id="IPR020547">
    <property type="entry name" value="ATP_synth_F1_esu_C"/>
</dbReference>
<dbReference type="InterPro" id="IPR036771">
    <property type="entry name" value="ATPsynth_dsu/esu_N"/>
</dbReference>
<dbReference type="NCBIfam" id="TIGR01216">
    <property type="entry name" value="ATP_synt_epsi"/>
    <property type="match status" value="1"/>
</dbReference>
<dbReference type="NCBIfam" id="NF001846">
    <property type="entry name" value="PRK00571.1-3"/>
    <property type="match status" value="1"/>
</dbReference>
<dbReference type="NCBIfam" id="NF009980">
    <property type="entry name" value="PRK13446.1"/>
    <property type="match status" value="1"/>
</dbReference>
<dbReference type="PANTHER" id="PTHR13822">
    <property type="entry name" value="ATP SYNTHASE DELTA/EPSILON CHAIN"/>
    <property type="match status" value="1"/>
</dbReference>
<dbReference type="PANTHER" id="PTHR13822:SF10">
    <property type="entry name" value="ATP SYNTHASE EPSILON CHAIN, CHLOROPLASTIC"/>
    <property type="match status" value="1"/>
</dbReference>
<dbReference type="Pfam" id="PF00401">
    <property type="entry name" value="ATP-synt_DE"/>
    <property type="match status" value="1"/>
</dbReference>
<dbReference type="Pfam" id="PF02823">
    <property type="entry name" value="ATP-synt_DE_N"/>
    <property type="match status" value="1"/>
</dbReference>
<dbReference type="SUPFAM" id="SSF46604">
    <property type="entry name" value="Epsilon subunit of F1F0-ATP synthase C-terminal domain"/>
    <property type="match status" value="1"/>
</dbReference>
<dbReference type="SUPFAM" id="SSF51344">
    <property type="entry name" value="Epsilon subunit of F1F0-ATP synthase N-terminal domain"/>
    <property type="match status" value="1"/>
</dbReference>
<feature type="chain" id="PRO_1000127825" description="ATP synthase epsilon chain">
    <location>
        <begin position="1"/>
        <end position="133"/>
    </location>
</feature>
<keyword id="KW-0066">ATP synthesis</keyword>
<keyword id="KW-1003">Cell membrane</keyword>
<keyword id="KW-0139">CF(1)</keyword>
<keyword id="KW-0375">Hydrogen ion transport</keyword>
<keyword id="KW-0406">Ion transport</keyword>
<keyword id="KW-0472">Membrane</keyword>
<keyword id="KW-0813">Transport</keyword>
<proteinExistence type="inferred from homology"/>
<organism>
    <name type="scientific">Bacillus cereus (strain B4264)</name>
    <dbReference type="NCBI Taxonomy" id="405532"/>
    <lineage>
        <taxon>Bacteria</taxon>
        <taxon>Bacillati</taxon>
        <taxon>Bacillota</taxon>
        <taxon>Bacilli</taxon>
        <taxon>Bacillales</taxon>
        <taxon>Bacillaceae</taxon>
        <taxon>Bacillus</taxon>
        <taxon>Bacillus cereus group</taxon>
    </lineage>
</organism>
<comment type="function">
    <text evidence="1">Produces ATP from ADP in the presence of a proton gradient across the membrane.</text>
</comment>
<comment type="subunit">
    <text evidence="1">F-type ATPases have 2 components, CF(1) - the catalytic core - and CF(0) - the membrane proton channel. CF(1) has five subunits: alpha(3), beta(3), gamma(1), delta(1), epsilon(1). CF(0) has three main subunits: a, b and c.</text>
</comment>
<comment type="subcellular location">
    <subcellularLocation>
        <location evidence="1">Cell membrane</location>
        <topology evidence="1">Peripheral membrane protein</topology>
    </subcellularLocation>
</comment>
<comment type="similarity">
    <text evidence="1">Belongs to the ATPase epsilon chain family.</text>
</comment>
<protein>
    <recommendedName>
        <fullName evidence="1">ATP synthase epsilon chain</fullName>
    </recommendedName>
    <alternativeName>
        <fullName evidence="1">ATP synthase F1 sector epsilon subunit</fullName>
    </alternativeName>
    <alternativeName>
        <fullName evidence="1">F-ATPase epsilon subunit</fullName>
    </alternativeName>
</protein>
<accession>B7HFK0</accession>
<name>ATPE_BACC4</name>
<evidence type="ECO:0000255" key="1">
    <source>
        <dbReference type="HAMAP-Rule" id="MF_00530"/>
    </source>
</evidence>
<reference key="1">
    <citation type="submission" date="2008-10" db="EMBL/GenBank/DDBJ databases">
        <title>Genome sequence of Bacillus cereus B4264.</title>
        <authorList>
            <person name="Dodson R.J."/>
            <person name="Durkin A.S."/>
            <person name="Rosovitz M.J."/>
            <person name="Rasko D.A."/>
            <person name="Hoffmaster A."/>
            <person name="Ravel J."/>
            <person name="Sutton G."/>
        </authorList>
    </citation>
    <scope>NUCLEOTIDE SEQUENCE [LARGE SCALE GENOMIC DNA]</scope>
    <source>
        <strain>B4264</strain>
    </source>
</reference>